<evidence type="ECO:0000250" key="1"/>
<evidence type="ECO:0000255" key="2"/>
<evidence type="ECO:0000305" key="3"/>
<accession>P0CZ11</accession>
<protein>
    <recommendedName>
        <fullName>Avenin-like a7</fullName>
    </recommendedName>
    <alternativeName>
        <fullName>LMW-gliadin 1199</fullName>
        <shortName>LMGli1199</shortName>
    </alternativeName>
</protein>
<name>AVLA7_WHEAT</name>
<dbReference type="SMR" id="P0CZ11"/>
<dbReference type="STRING" id="4565.P0CZ11"/>
<dbReference type="Proteomes" id="UP000019116">
    <property type="component" value="Unplaced"/>
</dbReference>
<dbReference type="ExpressionAtlas" id="P0CZ11">
    <property type="expression patterns" value="baseline and differential"/>
</dbReference>
<dbReference type="GO" id="GO:0045735">
    <property type="term" value="F:nutrient reservoir activity"/>
    <property type="evidence" value="ECO:0007669"/>
    <property type="project" value="UniProtKB-KW"/>
</dbReference>
<dbReference type="CDD" id="cd00261">
    <property type="entry name" value="AAI_SS"/>
    <property type="match status" value="1"/>
</dbReference>
<dbReference type="Gene3D" id="1.10.110.10">
    <property type="entry name" value="Plant lipid-transfer and hydrophobic proteins"/>
    <property type="match status" value="1"/>
</dbReference>
<dbReference type="InterPro" id="IPR036312">
    <property type="entry name" value="Bifun_inhib/LTP/seed_sf"/>
</dbReference>
<dbReference type="InterPro" id="IPR016140">
    <property type="entry name" value="Bifunc_inhib/LTP/seed_store"/>
</dbReference>
<dbReference type="InterPro" id="IPR001954">
    <property type="entry name" value="Glia_glutenin"/>
</dbReference>
<dbReference type="PANTHER" id="PTHR33454">
    <property type="entry name" value="PROLAMIN PPROL 14P"/>
    <property type="match status" value="1"/>
</dbReference>
<dbReference type="PANTHER" id="PTHR33454:SF19">
    <property type="entry name" value="PROLAMIN PPROL 14P"/>
    <property type="match status" value="1"/>
</dbReference>
<dbReference type="Pfam" id="PF13016">
    <property type="entry name" value="Gliadin"/>
    <property type="match status" value="1"/>
</dbReference>
<dbReference type="PRINTS" id="PR00208">
    <property type="entry name" value="GLIADGLUTEN"/>
</dbReference>
<dbReference type="SMART" id="SM00499">
    <property type="entry name" value="AAI"/>
    <property type="match status" value="1"/>
</dbReference>
<dbReference type="SUPFAM" id="SSF47699">
    <property type="entry name" value="Bifunctional inhibitor/lipid-transfer protein/seed storage 2S albumin"/>
    <property type="match status" value="1"/>
</dbReference>
<proteinExistence type="inferred from homology"/>
<reference key="1">
    <citation type="journal article" date="2003" name="Theor. Appl. Genet.">
        <title>The characterisation and mapping of a family of LMW-gliadin genes: effects on dough properties and bread volume.</title>
        <authorList>
            <person name="Clarke B.C."/>
            <person name="Phongkham T."/>
            <person name="Gianibelli M.C."/>
            <person name="Beasley H."/>
            <person name="Bekes F."/>
        </authorList>
    </citation>
    <scope>NUCLEOTIDE SEQUENCE [GENOMIC DNA / MRNA]</scope>
    <source>
        <strain>cv. Wyuna</strain>
    </source>
</reference>
<comment type="function">
    <text evidence="1">Seed storage protein. Not integrated in the gluten polymer through disulfide bonds, unless incorporated by reduction and reoxidation during dough making. Increases dough strength and bread volume, but decreases dough stability when added into a base wheat flour (By similarity).</text>
</comment>
<comment type="PTM">
    <text evidence="3">Contains 7 disulfide bonds.</text>
</comment>
<comment type="similarity">
    <text evidence="3">Belongs to the prolamin family.</text>
</comment>
<keyword id="KW-1015">Disulfide bond</keyword>
<keyword id="KW-1185">Reference proteome</keyword>
<keyword id="KW-0708">Seed storage protein</keyword>
<keyword id="KW-0732">Signal</keyword>
<keyword id="KW-0758">Storage protein</keyword>
<sequence>MKTMFILALLAFTATSAVAQLYTTCSQGYGQCQQQPQPQPQMNTCSAFLQQCIQTPYVQSQMWQASSCQLMRQQCCQPLAQISEQARCQAVCSVSQIIMRQQQGQRFGQPQQQQGQSFSQPQQQVPVEIMRMVLQTLPSMCSVNIPQYCTTTPCSTITPAIYSIPMTATCAGGAC</sequence>
<organism>
    <name type="scientific">Triticum aestivum</name>
    <name type="common">Wheat</name>
    <dbReference type="NCBI Taxonomy" id="4565"/>
    <lineage>
        <taxon>Eukaryota</taxon>
        <taxon>Viridiplantae</taxon>
        <taxon>Streptophyta</taxon>
        <taxon>Embryophyta</taxon>
        <taxon>Tracheophyta</taxon>
        <taxon>Spermatophyta</taxon>
        <taxon>Magnoliopsida</taxon>
        <taxon>Liliopsida</taxon>
        <taxon>Poales</taxon>
        <taxon>Poaceae</taxon>
        <taxon>BOP clade</taxon>
        <taxon>Pooideae</taxon>
        <taxon>Triticodae</taxon>
        <taxon>Triticeae</taxon>
        <taxon>Triticinae</taxon>
        <taxon>Triticum</taxon>
    </lineage>
</organism>
<feature type="signal peptide" evidence="2">
    <location>
        <begin position="1"/>
        <end position="19"/>
    </location>
</feature>
<feature type="chain" id="PRO_0000410698" description="Avenin-like a7">
    <location>
        <begin position="20"/>
        <end position="175"/>
    </location>
</feature>